<keyword id="KW-0050">Antiport</keyword>
<keyword id="KW-0445">Lipid transport</keyword>
<keyword id="KW-0472">Membrane</keyword>
<keyword id="KW-0496">Mitochondrion</keyword>
<keyword id="KW-0999">Mitochondrion inner membrane</keyword>
<keyword id="KW-1185">Reference proteome</keyword>
<keyword id="KW-0677">Repeat</keyword>
<keyword id="KW-0812">Transmembrane</keyword>
<keyword id="KW-1133">Transmembrane helix</keyword>
<keyword id="KW-0813">Transport</keyword>
<reference key="1">
    <citation type="journal article" date="2005" name="Nature">
        <title>The genome of the social amoeba Dictyostelium discoideum.</title>
        <authorList>
            <person name="Eichinger L."/>
            <person name="Pachebat J.A."/>
            <person name="Gloeckner G."/>
            <person name="Rajandream M.A."/>
            <person name="Sucgang R."/>
            <person name="Berriman M."/>
            <person name="Song J."/>
            <person name="Olsen R."/>
            <person name="Szafranski K."/>
            <person name="Xu Q."/>
            <person name="Tunggal B."/>
            <person name="Kummerfeld S."/>
            <person name="Madera M."/>
            <person name="Konfortov B.A."/>
            <person name="Rivero F."/>
            <person name="Bankier A.T."/>
            <person name="Lehmann R."/>
            <person name="Hamlin N."/>
            <person name="Davies R."/>
            <person name="Gaudet P."/>
            <person name="Fey P."/>
            <person name="Pilcher K."/>
            <person name="Chen G."/>
            <person name="Saunders D."/>
            <person name="Sodergren E.J."/>
            <person name="Davis P."/>
            <person name="Kerhornou A."/>
            <person name="Nie X."/>
            <person name="Hall N."/>
            <person name="Anjard C."/>
            <person name="Hemphill L."/>
            <person name="Bason N."/>
            <person name="Farbrother P."/>
            <person name="Desany B."/>
            <person name="Just E."/>
            <person name="Morio T."/>
            <person name="Rost R."/>
            <person name="Churcher C.M."/>
            <person name="Cooper J."/>
            <person name="Haydock S."/>
            <person name="van Driessche N."/>
            <person name="Cronin A."/>
            <person name="Goodhead I."/>
            <person name="Muzny D.M."/>
            <person name="Mourier T."/>
            <person name="Pain A."/>
            <person name="Lu M."/>
            <person name="Harper D."/>
            <person name="Lindsay R."/>
            <person name="Hauser H."/>
            <person name="James K.D."/>
            <person name="Quiles M."/>
            <person name="Madan Babu M."/>
            <person name="Saito T."/>
            <person name="Buchrieser C."/>
            <person name="Wardroper A."/>
            <person name="Felder M."/>
            <person name="Thangavelu M."/>
            <person name="Johnson D."/>
            <person name="Knights A."/>
            <person name="Loulseged H."/>
            <person name="Mungall K.L."/>
            <person name="Oliver K."/>
            <person name="Price C."/>
            <person name="Quail M.A."/>
            <person name="Urushihara H."/>
            <person name="Hernandez J."/>
            <person name="Rabbinowitsch E."/>
            <person name="Steffen D."/>
            <person name="Sanders M."/>
            <person name="Ma J."/>
            <person name="Kohara Y."/>
            <person name="Sharp S."/>
            <person name="Simmonds M.N."/>
            <person name="Spiegler S."/>
            <person name="Tivey A."/>
            <person name="Sugano S."/>
            <person name="White B."/>
            <person name="Walker D."/>
            <person name="Woodward J.R."/>
            <person name="Winckler T."/>
            <person name="Tanaka Y."/>
            <person name="Shaulsky G."/>
            <person name="Schleicher M."/>
            <person name="Weinstock G.M."/>
            <person name="Rosenthal A."/>
            <person name="Cox E.C."/>
            <person name="Chisholm R.L."/>
            <person name="Gibbs R.A."/>
            <person name="Loomis W.F."/>
            <person name="Platzer M."/>
            <person name="Kay R.R."/>
            <person name="Williams J.G."/>
            <person name="Dear P.H."/>
            <person name="Noegel A.A."/>
            <person name="Barrell B.G."/>
            <person name="Kuspa A."/>
        </authorList>
    </citation>
    <scope>NUCLEOTIDE SEQUENCE [LARGE SCALE GENOMIC DNA]</scope>
    <source>
        <strain>AX4</strain>
    </source>
</reference>
<reference key="2">
    <citation type="journal article" date="2007" name="Biochimie">
        <title>Mitochondrial carrier family: repertoire and peculiarities of the cellular slime mould Dictyostelium discoideum.</title>
        <authorList>
            <person name="Satre M."/>
            <person name="Mattei S."/>
            <person name="Aubry L."/>
            <person name="Gaudet P."/>
            <person name="Pelosi L."/>
            <person name="Brandolin G."/>
            <person name="Klein G."/>
        </authorList>
    </citation>
    <scope>REVIEW</scope>
</reference>
<proteinExistence type="inferred from homology"/>
<gene>
    <name type="primary">mcfT</name>
    <name type="synonym">slc25a21</name>
    <name type="ORF">DDB_G0267704</name>
</gene>
<organism>
    <name type="scientific">Dictyostelium discoideum</name>
    <name type="common">Social amoeba</name>
    <dbReference type="NCBI Taxonomy" id="44689"/>
    <lineage>
        <taxon>Eukaryota</taxon>
        <taxon>Amoebozoa</taxon>
        <taxon>Evosea</taxon>
        <taxon>Eumycetozoa</taxon>
        <taxon>Dictyostelia</taxon>
        <taxon>Dictyosteliales</taxon>
        <taxon>Dictyosteliaceae</taxon>
        <taxon>Dictyostelium</taxon>
    </lineage>
</organism>
<evidence type="ECO:0000250" key="1"/>
<evidence type="ECO:0000250" key="2">
    <source>
        <dbReference type="UniProtKB" id="Q9BQT8"/>
    </source>
</evidence>
<evidence type="ECO:0000255" key="3"/>
<evidence type="ECO:0000256" key="4">
    <source>
        <dbReference type="SAM" id="MobiDB-lite"/>
    </source>
</evidence>
<evidence type="ECO:0000305" key="5"/>
<accession>Q55GE2</accession>
<sequence>MTSKGNAGNPPTPTPAPVKSQPLWHNLVSGGIAGVSEILVMYPLDVVKTRQQLQVGKGQSMMSSLVTMVRHDGLKMYRGIVPPILVEAPKRAIKFASNKFYEKQILSYCGNTKPTQMQAIGSGVLAGITEAFIVVPFELVKIRLQAKENAGKYTSTMDCVNKTFRAEGLSGFFKGLESTIWRHACWNGGYFGLIHTIKSALPKPTTEQGVLVNNFIAGGLAGTFGTMLNTPADVVKSRIQNQVGAGKYNWCIPSILTVAREEGFSALYKGFLPKVLRLGPGGGILLVVNEFVMKLLAGKN</sequence>
<dbReference type="EMBL" id="AAFI02000003">
    <property type="protein sequence ID" value="EAL73305.1"/>
    <property type="molecule type" value="Genomic_DNA"/>
</dbReference>
<dbReference type="RefSeq" id="XP_647242.1">
    <property type="nucleotide sequence ID" value="XM_642150.1"/>
</dbReference>
<dbReference type="SMR" id="Q55GE2"/>
<dbReference type="FunCoup" id="Q55GE2">
    <property type="interactions" value="33"/>
</dbReference>
<dbReference type="STRING" id="44689.Q55GE2"/>
<dbReference type="GlyGen" id="Q55GE2">
    <property type="glycosylation" value="2 sites"/>
</dbReference>
<dbReference type="PaxDb" id="44689-DDB0234109"/>
<dbReference type="EnsemblProtists" id="EAL73305">
    <property type="protein sequence ID" value="EAL73305"/>
    <property type="gene ID" value="DDB_G0267704"/>
</dbReference>
<dbReference type="GeneID" id="8616047"/>
<dbReference type="KEGG" id="ddi:DDB_G0267704"/>
<dbReference type="dictyBase" id="DDB_G0267704">
    <property type="gene designation" value="mcfT"/>
</dbReference>
<dbReference type="VEuPathDB" id="AmoebaDB:DDB_G0267704"/>
<dbReference type="eggNOG" id="KOG0754">
    <property type="taxonomic scope" value="Eukaryota"/>
</dbReference>
<dbReference type="HOGENOM" id="CLU_015166_5_2_1"/>
<dbReference type="InParanoid" id="Q55GE2"/>
<dbReference type="OMA" id="LPFQYQF"/>
<dbReference type="PhylomeDB" id="Q55GE2"/>
<dbReference type="Reactome" id="R-DDI-71064">
    <property type="pathway name" value="Lysine catabolism"/>
</dbReference>
<dbReference type="PRO" id="PR:Q55GE2"/>
<dbReference type="Proteomes" id="UP000002195">
    <property type="component" value="Chromosome 1"/>
</dbReference>
<dbReference type="GO" id="GO:0005743">
    <property type="term" value="C:mitochondrial inner membrane"/>
    <property type="evidence" value="ECO:0000250"/>
    <property type="project" value="dictyBase"/>
</dbReference>
<dbReference type="GO" id="GO:0015297">
    <property type="term" value="F:antiporter activity"/>
    <property type="evidence" value="ECO:0007669"/>
    <property type="project" value="UniProtKB-KW"/>
</dbReference>
<dbReference type="GO" id="GO:0005310">
    <property type="term" value="F:dicarboxylic acid transmembrane transporter activity"/>
    <property type="evidence" value="ECO:0000250"/>
    <property type="project" value="dictyBase"/>
</dbReference>
<dbReference type="GO" id="GO:0006869">
    <property type="term" value="P:lipid transport"/>
    <property type="evidence" value="ECO:0007669"/>
    <property type="project" value="UniProtKB-KW"/>
</dbReference>
<dbReference type="GO" id="GO:0006839">
    <property type="term" value="P:mitochondrial transport"/>
    <property type="evidence" value="ECO:0000250"/>
    <property type="project" value="dictyBase"/>
</dbReference>
<dbReference type="FunFam" id="1.50.40.10:FF:000353">
    <property type="entry name" value="Putative tricarboxylate secondary active transmembrane transporter"/>
    <property type="match status" value="1"/>
</dbReference>
<dbReference type="Gene3D" id="1.50.40.10">
    <property type="entry name" value="Mitochondrial carrier domain"/>
    <property type="match status" value="2"/>
</dbReference>
<dbReference type="InterPro" id="IPR002067">
    <property type="entry name" value="Mit_carrier"/>
</dbReference>
<dbReference type="InterPro" id="IPR051752">
    <property type="entry name" value="Mito_2-oxodicarb_carrier"/>
</dbReference>
<dbReference type="InterPro" id="IPR018108">
    <property type="entry name" value="Mitochondrial_sb/sol_carrier"/>
</dbReference>
<dbReference type="InterPro" id="IPR023395">
    <property type="entry name" value="Mt_carrier_dom_sf"/>
</dbReference>
<dbReference type="PANTHER" id="PTHR46356">
    <property type="entry name" value="MITOCHONDRIAL 2-OXODICARBOXYLATE CARRIER"/>
    <property type="match status" value="1"/>
</dbReference>
<dbReference type="PANTHER" id="PTHR46356:SF1">
    <property type="entry name" value="MITOCHONDRIAL 2-OXODICARBOXYLATE CARRIER"/>
    <property type="match status" value="1"/>
</dbReference>
<dbReference type="Pfam" id="PF00153">
    <property type="entry name" value="Mito_carr"/>
    <property type="match status" value="3"/>
</dbReference>
<dbReference type="PRINTS" id="PR00926">
    <property type="entry name" value="MITOCARRIER"/>
</dbReference>
<dbReference type="SUPFAM" id="SSF103506">
    <property type="entry name" value="Mitochondrial carrier"/>
    <property type="match status" value="1"/>
</dbReference>
<dbReference type="PROSITE" id="PS50920">
    <property type="entry name" value="SOLCAR"/>
    <property type="match status" value="3"/>
</dbReference>
<comment type="function">
    <text evidence="2">Transports dicarboxylates across the inner membranes of mitochondria by a counter-exchange mechanism. Can transport 2-oxoadipate (2-oxohexanedioate), 2-oxoglutarate, adipate (hexanedioate), glutarate, and to a lesser extent, pimelate (heptanedioate), 2-oxopimelate (2-oxoheptanedioate), 2-aminoadipate (2-aminohexanedioate), oxaloacetate, and citrate. Plays a central role in catabolism of lysine, hydroxylysine, and tryptophan, by transporting common metabolite intermediates (such as 2-oxoadipate) into the mitochondria, where it is converted into acetyl-CoA and can enter the citric acid (TCA) cycle.</text>
</comment>
<comment type="catalytic activity">
    <reaction evidence="2">
        <text>2-oxoadipate(in) + 2-oxoglutarate(out) = 2-oxoadipate(out) + 2-oxoglutarate(in)</text>
        <dbReference type="Rhea" id="RHEA:71739"/>
        <dbReference type="ChEBI" id="CHEBI:16810"/>
        <dbReference type="ChEBI" id="CHEBI:57499"/>
    </reaction>
</comment>
<comment type="catalytic activity">
    <reaction evidence="2">
        <text>hexanedioate(in) + 2-oxoglutarate(out) = hexanedioate(out) + 2-oxoglutarate(in)</text>
        <dbReference type="Rhea" id="RHEA:71743"/>
        <dbReference type="ChEBI" id="CHEBI:16810"/>
        <dbReference type="ChEBI" id="CHEBI:17128"/>
    </reaction>
</comment>
<comment type="catalytic activity">
    <reaction evidence="2">
        <text>L-2-aminoadipate(in) + 2-oxoglutarate(out) = L-2-aminoadipate(out) + 2-oxoglutarate(in)</text>
        <dbReference type="Rhea" id="RHEA:71747"/>
        <dbReference type="ChEBI" id="CHEBI:16810"/>
        <dbReference type="ChEBI" id="CHEBI:58672"/>
    </reaction>
</comment>
<comment type="catalytic activity">
    <reaction evidence="2">
        <text>glutarate(in) + 2-oxoglutarate(out) = glutarate(out) + 2-oxoglutarate(in)</text>
        <dbReference type="Rhea" id="RHEA:71751"/>
        <dbReference type="ChEBI" id="CHEBI:16810"/>
        <dbReference type="ChEBI" id="CHEBI:30921"/>
    </reaction>
</comment>
<comment type="catalytic activity">
    <reaction evidence="2">
        <text>2-oxoheptanedioate(in) + 2-oxoglutarate(out) = 2-oxoheptanedioate(out) + 2-oxoglutarate(in)</text>
        <dbReference type="Rhea" id="RHEA:71755"/>
        <dbReference type="ChEBI" id="CHEBI:16810"/>
        <dbReference type="ChEBI" id="CHEBI:72701"/>
    </reaction>
</comment>
<comment type="catalytic activity">
    <reaction evidence="2">
        <text>heptanedioate(in) + 2-oxoglutarate(out) = heptanedioate(out) + 2-oxoglutarate(in)</text>
        <dbReference type="Rhea" id="RHEA:71759"/>
        <dbReference type="ChEBI" id="CHEBI:16810"/>
        <dbReference type="ChEBI" id="CHEBI:36165"/>
    </reaction>
</comment>
<comment type="catalytic activity">
    <reaction evidence="2">
        <text>citrate(in) + 2-oxoglutarate(out) = citrate(out) + 2-oxoglutarate(in)</text>
        <dbReference type="Rhea" id="RHEA:71763"/>
        <dbReference type="ChEBI" id="CHEBI:16810"/>
        <dbReference type="ChEBI" id="CHEBI:16947"/>
    </reaction>
</comment>
<comment type="subcellular location">
    <subcellularLocation>
        <location evidence="1">Mitochondrion inner membrane</location>
        <topology evidence="1">Multi-pass membrane protein</topology>
    </subcellularLocation>
</comment>
<comment type="similarity">
    <text evidence="5">Belongs to the mitochondrial carrier (TC 2.A.29) family.</text>
</comment>
<protein>
    <recommendedName>
        <fullName>Probable mitochondrial 2-oxodicarboxylate carrier</fullName>
    </recommendedName>
    <alternativeName>
        <fullName>Solute carrier family 25 member 21</fullName>
    </alternativeName>
</protein>
<name>ODC_DICDI</name>
<feature type="chain" id="PRO_0000328282" description="Probable mitochondrial 2-oxodicarboxylate carrier">
    <location>
        <begin position="1"/>
        <end position="300"/>
    </location>
</feature>
<feature type="transmembrane region" description="Helical; Name=1" evidence="3">
    <location>
        <begin position="27"/>
        <end position="47"/>
    </location>
</feature>
<feature type="transmembrane region" description="Helical; Name=2" evidence="3">
    <location>
        <begin position="74"/>
        <end position="93"/>
    </location>
</feature>
<feature type="transmembrane region" description="Helical; Name=3" evidence="3">
    <location>
        <begin position="120"/>
        <end position="140"/>
    </location>
</feature>
<feature type="transmembrane region" description="Helical; Name=4" evidence="3">
    <location>
        <begin position="171"/>
        <end position="191"/>
    </location>
</feature>
<feature type="transmembrane region" description="Helical; Name=5" evidence="3">
    <location>
        <begin position="209"/>
        <end position="229"/>
    </location>
</feature>
<feature type="transmembrane region" description="Helical; Name=6" evidence="3">
    <location>
        <begin position="278"/>
        <end position="298"/>
    </location>
</feature>
<feature type="repeat" description="Solcar 1">
    <location>
        <begin position="21"/>
        <end position="104"/>
    </location>
</feature>
<feature type="repeat" description="Solcar 2">
    <location>
        <begin position="114"/>
        <end position="200"/>
    </location>
</feature>
<feature type="repeat" description="Solcar 3">
    <location>
        <begin position="209"/>
        <end position="295"/>
    </location>
</feature>
<feature type="region of interest" description="Disordered" evidence="4">
    <location>
        <begin position="1"/>
        <end position="20"/>
    </location>
</feature>